<accession>Q4WVN4</accession>
<dbReference type="EC" id="6.3.2.-"/>
<dbReference type="EMBL" id="AAHF01000003">
    <property type="protein sequence ID" value="EAL91342.1"/>
    <property type="molecule type" value="Genomic_DNA"/>
</dbReference>
<dbReference type="RefSeq" id="XP_753380.1">
    <property type="nucleotide sequence ID" value="XM_748287.1"/>
</dbReference>
<dbReference type="SMR" id="Q4WVN4"/>
<dbReference type="STRING" id="330879.Q4WVN4"/>
<dbReference type="EnsemblFungi" id="EAL91342">
    <property type="protein sequence ID" value="EAL91342"/>
    <property type="gene ID" value="AFUA_5G12730"/>
</dbReference>
<dbReference type="GeneID" id="3511687"/>
<dbReference type="KEGG" id="afm:AFUA_5G12730"/>
<dbReference type="VEuPathDB" id="FungiDB:Afu5g12730"/>
<dbReference type="eggNOG" id="KOG1178">
    <property type="taxonomic scope" value="Eukaryota"/>
</dbReference>
<dbReference type="HOGENOM" id="CLU_222660_0_0_1"/>
<dbReference type="InParanoid" id="Q4WVN4"/>
<dbReference type="OMA" id="KIWITVE"/>
<dbReference type="OrthoDB" id="416786at2759"/>
<dbReference type="Proteomes" id="UP000002530">
    <property type="component" value="Chromosome 5"/>
</dbReference>
<dbReference type="GO" id="GO:0005737">
    <property type="term" value="C:cytoplasm"/>
    <property type="evidence" value="ECO:0000318"/>
    <property type="project" value="GO_Central"/>
</dbReference>
<dbReference type="GO" id="GO:0016874">
    <property type="term" value="F:ligase activity"/>
    <property type="evidence" value="ECO:0007669"/>
    <property type="project" value="UniProtKB-KW"/>
</dbReference>
<dbReference type="GO" id="GO:0031177">
    <property type="term" value="F:phosphopantetheine binding"/>
    <property type="evidence" value="ECO:0000318"/>
    <property type="project" value="GO_Central"/>
</dbReference>
<dbReference type="GO" id="GO:0043041">
    <property type="term" value="P:amino acid activation for nonribosomal peptide biosynthetic process"/>
    <property type="evidence" value="ECO:0000318"/>
    <property type="project" value="GO_Central"/>
</dbReference>
<dbReference type="GO" id="GO:0019184">
    <property type="term" value="P:nonribosomal peptide biosynthetic process"/>
    <property type="evidence" value="ECO:0000255"/>
    <property type="project" value="AspGD"/>
</dbReference>
<dbReference type="GO" id="GO:0019748">
    <property type="term" value="P:secondary metabolic process"/>
    <property type="evidence" value="ECO:0000303"/>
    <property type="project" value="AspGD"/>
</dbReference>
<dbReference type="GO" id="GO:0044550">
    <property type="term" value="P:secondary metabolite biosynthetic process"/>
    <property type="evidence" value="ECO:0000318"/>
    <property type="project" value="GO_Central"/>
</dbReference>
<dbReference type="GO" id="GO:0009847">
    <property type="term" value="P:spore germination"/>
    <property type="evidence" value="ECO:0000315"/>
    <property type="project" value="AspGD"/>
</dbReference>
<dbReference type="CDD" id="cd05918">
    <property type="entry name" value="A_NRPS_SidN3_like"/>
    <property type="match status" value="6"/>
</dbReference>
<dbReference type="CDD" id="cd19542">
    <property type="entry name" value="CT_NRPS-like"/>
    <property type="match status" value="5"/>
</dbReference>
<dbReference type="CDD" id="cd19534">
    <property type="entry name" value="E_NRPS"/>
    <property type="match status" value="3"/>
</dbReference>
<dbReference type="CDD" id="cd19545">
    <property type="entry name" value="FUM14_C_NRPS-like"/>
    <property type="match status" value="1"/>
</dbReference>
<dbReference type="FunFam" id="3.40.50.980:FF:000001">
    <property type="entry name" value="Non-ribosomal peptide synthetase"/>
    <property type="match status" value="3"/>
</dbReference>
<dbReference type="FunFam" id="2.30.38.10:FF:000009">
    <property type="entry name" value="Nonribosomal peptide synthase inpB"/>
    <property type="match status" value="1"/>
</dbReference>
<dbReference type="FunFam" id="3.30.559.10:FF:000016">
    <property type="entry name" value="Nonribosomal peptide synthase Pes1"/>
    <property type="match status" value="3"/>
</dbReference>
<dbReference type="FunFam" id="3.30.559.10:FF:000017">
    <property type="entry name" value="Nonribosomal peptide synthase Pes1"/>
    <property type="match status" value="2"/>
</dbReference>
<dbReference type="FunFam" id="3.30.559.30:FF:000002">
    <property type="entry name" value="Nonribosomal peptide synthase Pes1"/>
    <property type="match status" value="3"/>
</dbReference>
<dbReference type="FunFam" id="3.30.559.30:FF:000005">
    <property type="entry name" value="Nonribosomal peptide synthase Pes1"/>
    <property type="match status" value="5"/>
</dbReference>
<dbReference type="FunFam" id="3.30.300.30:FF:000015">
    <property type="entry name" value="Nonribosomal peptide synthase SidD"/>
    <property type="match status" value="6"/>
</dbReference>
<dbReference type="FunFam" id="1.10.1200.10:FF:000005">
    <property type="entry name" value="Nonribosomal peptide synthetase 1"/>
    <property type="match status" value="3"/>
</dbReference>
<dbReference type="FunFam" id="3.40.50.12780:FF:000014">
    <property type="entry name" value="Nonribosomal peptide synthetase 1"/>
    <property type="match status" value="5"/>
</dbReference>
<dbReference type="FunFam" id="3.30.559.10:FF:000071">
    <property type="entry name" value="Nonribosomal peptide synthetase 8"/>
    <property type="match status" value="1"/>
</dbReference>
<dbReference type="FunFam" id="3.40.50.12780:FF:000126">
    <property type="entry name" value="Nonribosomal peptide synthetase 8"/>
    <property type="match status" value="1"/>
</dbReference>
<dbReference type="FunFam" id="3.30.559.30:FF:000034">
    <property type="entry name" value="Nonribosomal peptide synthetase easA"/>
    <property type="match status" value="1"/>
</dbReference>
<dbReference type="Gene3D" id="3.30.300.30">
    <property type="match status" value="6"/>
</dbReference>
<dbReference type="Gene3D" id="3.40.50.980">
    <property type="match status" value="2"/>
</dbReference>
<dbReference type="Gene3D" id="1.10.1200.10">
    <property type="entry name" value="ACP-like"/>
    <property type="match status" value="7"/>
</dbReference>
<dbReference type="Gene3D" id="3.30.559.10">
    <property type="entry name" value="Chloramphenicol acetyltransferase-like domain"/>
    <property type="match status" value="10"/>
</dbReference>
<dbReference type="Gene3D" id="2.30.38.10">
    <property type="entry name" value="Luciferase, Domain 3"/>
    <property type="match status" value="1"/>
</dbReference>
<dbReference type="Gene3D" id="3.40.50.12780">
    <property type="entry name" value="N-terminal domain of ligase-like"/>
    <property type="match status" value="5"/>
</dbReference>
<dbReference type="Gene3D" id="3.30.559.30">
    <property type="entry name" value="Nonribosomal peptide synthetase, condensation domain"/>
    <property type="match status" value="10"/>
</dbReference>
<dbReference type="InterPro" id="IPR010071">
    <property type="entry name" value="AA_adenyl_dom"/>
</dbReference>
<dbReference type="InterPro" id="IPR036736">
    <property type="entry name" value="ACP-like_sf"/>
</dbReference>
<dbReference type="InterPro" id="IPR045851">
    <property type="entry name" value="AMP-bd_C_sf"/>
</dbReference>
<dbReference type="InterPro" id="IPR020845">
    <property type="entry name" value="AMP-binding_CS"/>
</dbReference>
<dbReference type="InterPro" id="IPR000873">
    <property type="entry name" value="AMP-dep_synth/lig_dom"/>
</dbReference>
<dbReference type="InterPro" id="IPR042099">
    <property type="entry name" value="ANL_N_sf"/>
</dbReference>
<dbReference type="InterPro" id="IPR023213">
    <property type="entry name" value="CAT-like_dom_sf"/>
</dbReference>
<dbReference type="InterPro" id="IPR001242">
    <property type="entry name" value="Condensatn"/>
</dbReference>
<dbReference type="InterPro" id="IPR020806">
    <property type="entry name" value="PKS_PP-bd"/>
</dbReference>
<dbReference type="InterPro" id="IPR009081">
    <property type="entry name" value="PP-bd_ACP"/>
</dbReference>
<dbReference type="InterPro" id="IPR006162">
    <property type="entry name" value="Ppantetheine_attach_site"/>
</dbReference>
<dbReference type="NCBIfam" id="TIGR01733">
    <property type="entry name" value="AA-adenyl-dom"/>
    <property type="match status" value="6"/>
</dbReference>
<dbReference type="NCBIfam" id="NF003417">
    <property type="entry name" value="PRK04813.1"/>
    <property type="match status" value="6"/>
</dbReference>
<dbReference type="PANTHER" id="PTHR45527">
    <property type="entry name" value="NONRIBOSOMAL PEPTIDE SYNTHETASE"/>
    <property type="match status" value="1"/>
</dbReference>
<dbReference type="PANTHER" id="PTHR45527:SF12">
    <property type="entry name" value="NONRIBOSOMAL PEPTIDE SYNTHETASE IVOA"/>
    <property type="match status" value="1"/>
</dbReference>
<dbReference type="Pfam" id="PF00501">
    <property type="entry name" value="AMP-binding"/>
    <property type="match status" value="6"/>
</dbReference>
<dbReference type="Pfam" id="PF00668">
    <property type="entry name" value="Condensation"/>
    <property type="match status" value="10"/>
</dbReference>
<dbReference type="Pfam" id="PF00550">
    <property type="entry name" value="PP-binding"/>
    <property type="match status" value="7"/>
</dbReference>
<dbReference type="SMART" id="SM00823">
    <property type="entry name" value="PKS_PP"/>
    <property type="match status" value="7"/>
</dbReference>
<dbReference type="SUPFAM" id="SSF56801">
    <property type="entry name" value="Acetyl-CoA synthetase-like"/>
    <property type="match status" value="6"/>
</dbReference>
<dbReference type="SUPFAM" id="SSF47336">
    <property type="entry name" value="ACP-like"/>
    <property type="match status" value="7"/>
</dbReference>
<dbReference type="SUPFAM" id="SSF52777">
    <property type="entry name" value="CoA-dependent acyltransferases"/>
    <property type="match status" value="20"/>
</dbReference>
<dbReference type="PROSITE" id="PS00455">
    <property type="entry name" value="AMP_BINDING"/>
    <property type="match status" value="6"/>
</dbReference>
<dbReference type="PROSITE" id="PS50075">
    <property type="entry name" value="CARRIER"/>
    <property type="match status" value="7"/>
</dbReference>
<dbReference type="PROSITE" id="PS00012">
    <property type="entry name" value="PHOSPHOPANTETHEINE"/>
    <property type="match status" value="2"/>
</dbReference>
<dbReference type="PROSITE" id="PS50007">
    <property type="entry name" value="PIPLC_X_DOMAIN"/>
    <property type="match status" value="1"/>
</dbReference>
<sequence>MSNNTMVNMSIEMKYDNDDTTSPDQKLPGLEALEMVKGAASVVAEIEPSSSASSIMGSREHHERMLGPLEVCVHDLVQEQSRQHGQTIAVHSIEKDLTYAELERYADWMAKYLMVKRDIQAGHIIPFCLKKSVWTMVAMLAIMKTGAACAALDPSQPVSRIKRILDDTEAPLVIVHRDYLGLAETLDVPSIVLGPDLWEGTSSGDTDKPLPVVDATQPAYIAFTSGSTGEPKGIVVPHRSIATSMREHGPATRVDTETRALQFASYTFDMSFQEMFTTLTHGGCVCVPSEAERWNDLAGAMERLGVNWAKLTPTVVRLLHPEQVPSLRTLVVGGEPITQDIIQTWAHRVDLIVSYGPAEASIMAAVSDPLAPTALPRVIGRQVGGTLHVVDAGNHDRLVEGSGEGELLIEGPILATGYLKDQSRTDATFIIDPKWVSCDSENVTTAPRRFLKTGDLVHRDEDGVLYHLGRKDFRLKLNGRLIDLAAIETCLLGSAQIASAVVIATREDTFWQQSLVAVISAKPTPSSRPDPHDAGHIRIQTQHDLMLPLIRDLKDVAQSALPDYMVPTVWLVVDSVPRLPSGKIHRRRVVQWLENLDEFTVQEIRSMQNHTPHCEPETAMERRLRDIWAEVLNMPVSTVSTMASFTGLGGDSVAAMRLARRCAAQGLEIDVQMILQNLSITELAPRVKVAEHSTDTSADNERFSIGISLDQLCQSLPPRLRSSITLDDVVDTYRCSPMQEAILLSRSRFQGYYDVRWVAEVVSIDQDTPISLQRVRDAWVDVVRRHPALRTFFVQDASTGNRLLTQVILGSFPPLVSIDHSQATLDGIMGVNAAESSDPLHQEPHRLSLFSLPTGQVFLKLELNHALSDGVSTALIFRDLSLAYSKALPSSPAPSFGGFIRRLNLGEAEASSTALKYWTDRLTGMVPCLFPVLREAAWTGPSAVQHVEIPIHGSQGALRRFCTQHGTTIANVFQTAWALVLSIYTGTDDVSFCYLVSGRDASVDNVDEIVGPLISIMVHRLTLSRSLALLQVLRQVQSDFTVALGHQHCSLAQIAHSLNLRGQPMSNTVVNVQRRFSQGGPDGVADVYIRGIDCCNPTEFAIAVDVEDWETYMTARLSYWESCISQTQAEGIAETLAEVIRNIQTNPLQTVGEVALVGDAVLAKLSTWNAVLPEANEACLPELVERQVISQPSAVAIDTDAEQITYISLWNLSGLLAGRLIDSGVQPRDLVAVCVPQSSWAVIAMLAIQRAGGACVPLDPKAPAQRWWEIISRTGISTVVTSETKKHIMSSQLPGLQVVSADGTEIDQHHLQGSGRVLPVLSVDSTAYVLFTSGSTGSPKGIDVPHRAICTSLCAHCPVLGITNETRSLQFAAYTFDASIEETFGVLVHGGCVCIPSEDTKMNGLVDFINRKAISWAFFTPSLVRLIDPDLVPSLQTIVLGGEAVGNDIFNTWSHRVDLINGYGPAEASICCAAAHLSLRQTQSPSTIGRAVGCRIWVVDPQNINRLLPPDCVGELLIEGHIVANGYWGDEERTASSFLPPPEFLQSLSLEYPADNFRRCFYRTGDLVRQRHDGSLIYVGRSDWQTKVNGQRVEIGEVEAQLSFHMAKNHSNHLSMVCVPKSGPWMKRLVAILSLDPEECTVGNRSNVVFCLDKPETAAMIRTISKGIESSLPPFMIPTVWIPVKQLPTLASGKINRRCVQEWVETSNEGIFLSVSRINSEAFGTSSTETTRGLTPTETVIRAIWSRVLNIPLHSIGLDNTFLSLGGDSISAMQVVYQAHREGLTISVQDIFHCKTVAKLGRHADHSSKNTSSSNLLAPPVDEVEVPFALSPIQQWFFESVPHKPAILNHYNQSAHFRVMKEIDHSQLFKALQHVVQRHAMLRSRFILDSWSWQQKITTDIEGSFRLEVESIDAITAFRSCCERAQKMIDIIHGPLLVAILVKVAEPAQHFLVLIGHHLSMDVVSWSIIHRELEAFLAGGQVIAPLSSTSFQQWARLHYEPNIVPAEPREVLPFSVLEADLDYWGMRDTANEYRHGEYITTSVDEETTASIFKEANIAIGTEPVELIMAAVLYSFGRIFHDRSLPALYMEAHGREGDEFGLDLSGTVGWFTTICPLQLHRESLHTWARAVAQVKDRRRSIPAKGWAYFACRTVSPKGQASFNHHQQMEILFNFTGSTGDINDEHDRFLSPVRLMEDSRSDFDPKTPRVALFAIEASVENRQLRFSVSYHRSMRHVPRVKQWIHSLPSTLQEGVQMLSTIGRQPTLYDCPLAALNYSDLDSILARIQQSQADMVVEEIYPCSHIQEGILLSSMRNPGHYQVRWLVKVEARRGLPVSTQRLAKAWQSVVRKHSILRTIFVDDPSGTSSFLQVVVEDPRYPASIVEVQHRDSVASLDEDIDFTVGELPYRATIYQLHDGNVFFLLDISHAILDGTSMGILAHELVRGYDGSLTGDEAPHYRDYIRLLQTMPRNETLAHWKAYLQDIEPCKMISRNNCVEKVITPEVRKVAVQLPSTESLQQFCKTYEVTFANILQAVWAVVLMHYSGSETVCFGYLSSGRDLPIPHVDRAVGPYINILPCAVRLQQSSSRLDVVKAIQADLYQNLAHEHCSLWQIHKELGLKGTTLFNTLVNFQKTTAAVEDASISLTTVASRDPSEYDLAFNVTDEGSSMTAELAFWSSFMDEPDANDLSRAVSRVFNEFVRSPEAVLHDLSPIGPLNVEQIVRLMPSPISGEQQCLHWLIEQWVCRTPDAPAVCSTELEWSYAKLHQLTTSLSHHLCQLGVGRNDRAAICMEKSPWVIVAMLAVLQAGAAFVPLDPSHPRTRRESMISSLDAQVLLISLDADEDAHLTMSSCRQVRVGSTRGAGSDTGVSSNLPKNEPDDAAYILFTSGSTGQPKGVVVPHRAVCSSIKAWSDMLNIRSTTRSLQFAAYTFDAAIGEIFAVLANGGCVCVPSESERLNFLPETITQLDVNWSFLTPSVIRQIDPSSVPTLQTLALGGEPLSKEVIETWCDRVHLINVYGPTETCVFSHANPITDSKQEPSLIGPPILGRSWVVSPFNIDILVPRGCIGELVIESPAVAAGYFNNPEQTAKAFIAPPRWWKLAQDALSGSNKRTEDELPRFYLTGDMVRQNVDGSITYLGRRDTQTKINGQRVELGEIEYHILRLPAVLHAFVGVPKGGPYESRLVAVVSLRSEDGSGRGEAVLPEDFRLEVVEPQIAARYTSDLIVHLERNLPAYMVPAFLVVVRQLPLQPSGKINRRMILSWLSEPTMAGLQKTQHNFTRREEEPTTLGPVEKQMREIWSEVLNLPVTRIRLDQSFFDLGGDSITAMQVVSRCRRSGLQLTVQDLLRWKTITKVTPRTISLSQVTGERVYSLTSAGSVVDMRSIASKLEAIGLPGRAGVKGVYACSPMQEGILLAALKSPGKYEVVLMLEIRATGSQDRVDLELLESAWLQVVDRHDMLRTVFLQEKTATGVFSQVVYKHIDPPIEITTVDDLDTLRSASFSAGHFDCIPYRVTLCKLSGSSLAYVRLDISHAVVDGWSLSILSRDLQQAYDGQLPSQPVAQYCELIQYLESQPQETSMEFWRHLLTGMVPCHLPNMISNSGSHSTQEVKLHQTRLEVDRNQELRDFCAAHDITIANVFQLAWAVVLYRYTGMEDVCFGYLISGRDAPIDNLEDAVGPFINILVARATLRQGISVKEFLGEIRDTFLAMSAHQHTSLTQIQHELAVGNLGLFNTALNVQHRALTQQNPHSDIEICELSGRDPSEFGAILNVIDAGNTLEFALSYWSDLLSEETGREICSFLSCILSAVLDNSGCSVKTVSQTAADAARSFIDRKGDGDISSTPRGNPAPECYRPLKEPTNLIALTVQQVCAEVLDLSVSSLSLDETFLSLGGDSLLAMKVVSRCREHGVALTVQHMLQNQTIREVFEHARFSDSFSYRQLRHTPDPTGIPFPLSPIQKLHFHLMPTGQNYYNQSFFLRVTERLEASAIERAVRLLVLRHSVLRARFNQQIDGAWAQVISPDIEGSYHFSATSLISWDDLWPLVEGAQKRLNIRQGPLLSVDVLNLQGGDQHIYLVGHHLVVDLVSWRIILADLEIILRGGELSHDPPLSFQTWIRLATEYAQDNIDPATTLPFQLRPGNFAYWGMAGIPNLAKDVSSLSFTLPTDITSSLLGPANASLGTEPTDLMIAALAHTFSLVFHDHSGLTIFQESHGREPWTPEIDLSATCGWFTVLTPLSVETDKVEFRNTLKRVKDLRRRIPGKGWPYFASRFASRRRTGQKLDEKDEIEVLFNFVGLYQQFNRNDSLFVRPVADVSLPPDFSPDSIRLALIEINSLVDGQGRMVMHVTYNSRMKRQEGLTAWLERSQQVLEEEMPKLLTAAPERTPSDFQLLSLSYNELSALESHCHKQFGLDLNAVEDIYPCSPMQEGILLSQVRDPSLYRVEWVADVRCVGGEAVDLGQLKQAWGQVVRRHPILRTIFVERDHDAGAYLQLVLNQSLFPSSCNSASAYKVLLHLPYHITFQCLPETDTVRITLQANHAIIDGVTLAILARDLGSAYGGELPDVSGPPFSDFVKFLRTRTIDKDLQYWSEFLSDSQPTLFPSLGSQLGPTPGAEDDLFVEKHIHFADGAKMHEFCATFGVTVLNLFQVAWALVLRLYTGQDDVCFGYLASGRDSNVSGIDDIAGPMINMLVCRLQPTRDKTPRELLKQAHKHLTLALSHQHVPLAEVQNRLRTHGTPLFNTLVNLQKSNVGQGISHLTISTIGANDPNEFTIGLQIADNGQSIDVLFGHWLSRVSVDQADLLASLLSSTVNNIMARPRARLGTINFCNGVHAQKMAEWNEQARRPVVESTLHSIIQDQARQRPSTIAIASTEAMWTYEELERAADQTARYLLRQGVQPGTILPFCMAKSPRAIVVMLAILKVGCACAALDPAHPPDRLKLIVQQTGAKFVISEPVVMDSLILDGTANILSLTDCGGSINEPGLTPCQLPSVKPTDIAFIMFTSGSTGTPKGVLIQHDSICTSIQYNGEAEMVTSSTRGLQFSSYAFDTSVDEIFTVLSRGGCVCVPTEAERMNHLAAFISRFDVNWLSITPTVARLIAPGEVPSVRTIVLGGEEIDPGVVNHWKDHAELVASYGPAEASIACAASPVTSVVGDALLGRPVASSLWVVDPSDHDALMPIGTAGELVIGGPLVARGYLNDPDRTSLAFVCPKWSTELNLPFNRFYRTGDMARWNVDGTLSYVGRLDTQVKLNGQRVELGEVERHLLAQPCLQCSTCAVPQSGLLANRLVGVIGLQTPQISAADGFHCLEISQARTLVPYASDAEESLRAKLPPYMVPTVWIGVQSLPLNASGKLDRRKVNKWLESFQDEDTLNIFQLVGSEQEAEDEPPLTPIQQTIRNIWADVLGRTSESIGLQRSFFALGGDSVAAIRVVAQCRQANLQLTVQDVFQARTIQSLAACATAIIEKPVETVSSLLEPSQCENPESELAKLDSEVLSGLGGPENIEEIYPCSPMQEGILFSRSSIGGSYDTRLVVEVLPRDGAEVDLDRLKNAWAAVVQRHPILRTVFADRPSDDSAFIQVTFRKYRPVIMGCETSEQSLDDMIAMPVQPFDDRRNPPHRFTICTSSQQRVFILLEISHVLTDAVSIDIIWRDLQLAYEGALTTSKAPRYSRFVSYLQGTSQKDHMAYWLKFLKDAEPCLFPHLGTGNQKGATRAVSVTISRAMTDHIRQFCASLQITVANLIQVMWSMVLRSYTGMDDVSFGYITSGRDLPLDGIDDLVGPLISMMISRVRYTPSMKVADVIKQVGQDTVASMAHQHCSLAAIHREVGLKSRSLFNTVLTVVRPHSTQSIDSSLQLTQIASSAGTSEFDVVLEVSDSGVELDTTLAYSESALRSEDATNLSQAIMCALNWIIAHPESLVDHLSLCSPDLISQMTAMNNASPEWELRQCLHELISLRAHRQPDSPALWTGQGTMTYSELDSKSTMLARQLISLGVRPGSLVPICLSKSTVAVLAMLAIMKAGGAFVPLDPLHPTQRLADLVQRTGAKLILSSANTRNSAEFAGPRVVEVEQLLSRVTSVNEIDGVCPAPDPEGIAYVLFTSGSTGVPKGVVVPHRAVCCSIRAHSEAMNINTTSRSLQFASYTFDACICEIFSVLVAGGTVCIPSEEERVHDLAGFITRSQANWAFFTPTVIRTLGLSPSQVPSLRTLVLGGEVVTVHDARTWAGHVSLFNGYGPTETCVFCATTPIHPDGVTYGRIGRPIGCAAWVVRPDNHDILLPPGCPGELLIEGPIVSQGYLNDPVRTQEAFITHPAWAQNRKLSQNQSSARRFYKTGDLVRQSPDGTLVYMARLDSQVKINGQRLDLGEIRHQIHSVVSEDVQVFIDLLPPTCLPNEKALLVAFLASTRFEPEQTSGFSPPIKALTSQLEQDLPRLLPRYMIPSVYLPLSAIPLTSGGKVDRQALRRRVSRMSMKELLVYTGEEQGTKLPISTAEEQQMQMLWAEVLRIPPETIGASDHFFRLGADSIDGMKLVALAQRHGILITLADIFRSPRLSDLATLLESPAHPDDSKHDLKSIIPAFSLLNVHSRNTVLKEIKADYALDVSQIEDIYPCTPLQESLMAASIQSHGAYVHHLVEKLPPSGEVPAIMSAWQSVIKMTPILRTRIVQTVSAGLLQVVLKESVQWLHRRQAIQEYLDEDARHSMTLGDPLLRLACLHDPGTPHTGHIVITIHHSIYDGWSLPHIRKLVYATQNGHPCSTSLPFNRFIHYLERKSDSRASDSFWQSFLYRSQPLAFPPLPSTGYQPVGTDSVQLSVHWPSTFPPSAFTLSTFVRVAWALVLGSYSGTDDVIFGLSLSGRDTPIPGILDILGPTICTVPFRVKFSGESIGALLERAHADSAAMLPYQHIGLHHIRQLGPDCQLACDFQTLLVIQPARDPSDPEPHSELTFTSSGGLTYAFALICQPHPSGIELHGDFDSNCVSRPVAERLLSQMKSVMGTLIFGDRRKLAAEVDVIDISQKATLATWQREPLQPGEGRVEDLIISRAQQAPDDLAIHAWDGELTYNELVEESATLAENLKRRGIGPGMLVPLCFVKSIYYVVTLLAVTRTGAAFVPIDPDAPIERMQKILKLTNACCILTSASLAEQTRAKAPARVAVFAIPLDRSARMSTDSDLMPGQSIVSHEAVYVLFTSGSTGIPKGVVVTHSSMKASLKAHGRRLGLSESSRVLQFSNHTFDVSLLEILTTLAYGGCVCIPSDGDRVNRLSEYMRDAKVNFAILTPSVARILSPVSVPDLRTLALAGEAWGQEIVNIWRDSVRLFNAYGPTEATILSAIGEVDAQCFRPNNIGSGSGALCWVTSPTDPTRLMAIGAAGELLLEGPILAQGYLGEEEKTRAAFIDPPMWRRELSSHGAPPCRSSLYRTGDLARYEEDGSITYLGRMDGQVKIRGQRTELSEIEHHILASDAVRNAVVLLRKNKLVCVLSLQSTSLTPAPSRPGDIRPVSDDDRDAALRICLSIRAGLARKVPEYMVPDLWVPVIDLPLSSSGKLARKGVDDWLASVDTKHLINLSLQKIPLSTTSPSPNIASSSVERAIRQVIAGALQLPVQQVSVDAPFTALGGDSITAILVASKLRNMGILLTMRDILEFPSIQHLASREDLTAPSPANLPLDVEQVNVPFELTPIQRFFFCFFPDGANHFNQSILVRVARRFTYDQWITSLRALVQRHGMLRARFSNVDNNLQQRITDESEGACCVKWHTLEAMDPSYISTALDRCERRIDIFQGPICAVEIFDFPHEQIFFIAAHHLVMDFVSQQILLKDLDSLLAGEELSTPRPLSFQAWSLKQIEYGSNLALSPQAVLPHHENVPLANLNYWGIAAMDSCYADSAVRVLEFDSTVTSSLVGDANRAFNSEPIELFIASLLHSFANTFTDRSAPAIFKEGHGRQTREPRLDPSSTVGWFTTITPIALAVSPQLSTFEDTLRRVKDICRAIPANGFDYFTSRFLNASGSSAFQSHGPMMEIVLNYAGVLNNVQQGGTLFCPIATEEQRQMRYHDINPQLRRFAVFDIYAQVAGGKLSFTFAYSPSLNYQDRISAWIESLRRLLEAISVDLPAKQPQKTLADYPRARLDYTALERLHKDIIPSLYPAKLDDVWECSPTQTVMLRARSYQPLFFSPHFIWKIAGTKASEGNRERLTKAWKRIVARHSVLRSVFTSQLTATYHQIVLANPPFFITWADMAGKESPSEALRRLPPLPSDELHLAFRLTASEDDEGDLFCRLDINHALIDHVSINVILSDVIAVYGGQPMDSDSAFSTFRDYVEYSHLRLVDGEPYWQDRLHDACPCVLTQRPYRQIPGVLFSKSVSVNASALKALCLSSGFTLASLFQACWAVLLQRYVGSDDVLFGYIASNRGLPIRGIDRMVGPLISILPRRVRLSPSASSVSEQVRAIAKHIHEQLHDDLEHHMSAGNTMAEVIQRGRCIEELLFPFDTAINFRSQPSAAVNSVSSDPTSPLQFADGQDPMPVSHQP</sequence>
<protein>
    <recommendedName>
        <fullName>Nonribosomal peptide synthetase 8</fullName>
        <ecNumber>6.3.2.-</ecNumber>
    </recommendedName>
</protein>
<feature type="chain" id="PRO_0000416549" description="Nonribosomal peptide synthetase 8">
    <location>
        <begin position="1"/>
        <end position="8515"/>
    </location>
</feature>
<feature type="domain" description="Carrier 1" evidence="1">
    <location>
        <begin position="615"/>
        <end position="691"/>
    </location>
</feature>
<feature type="domain" description="Carrier 2" evidence="1">
    <location>
        <begin position="1732"/>
        <end position="1808"/>
    </location>
</feature>
<feature type="domain" description="Carrier 3" evidence="1">
    <location>
        <begin position="3286"/>
        <end position="3362"/>
    </location>
</feature>
<feature type="domain" description="Carrier 4" evidence="1">
    <location>
        <begin position="3857"/>
        <end position="3933"/>
    </location>
</feature>
<feature type="domain" description="Carrier 5" evidence="1">
    <location>
        <begin position="5385"/>
        <end position="5461"/>
    </location>
</feature>
<feature type="domain" description="Carrier 6" evidence="1">
    <location>
        <begin position="6482"/>
        <end position="6558"/>
    </location>
</feature>
<feature type="domain" description="Carrier 7" evidence="1">
    <location>
        <begin position="7575"/>
        <end position="7651"/>
    </location>
</feature>
<feature type="region of interest" description="Adenylation 1">
    <location>
        <begin position="59"/>
        <end position="736"/>
    </location>
</feature>
<feature type="region of interest" description="Condensation 1">
    <location>
        <begin position="587"/>
        <end position="1159"/>
    </location>
</feature>
<feature type="region of interest" description="Adenylation 2">
    <location>
        <begin position="1163"/>
        <end position="1705"/>
    </location>
</feature>
<feature type="region of interest" description="Epimerase 1">
    <location>
        <begin position="1830"/>
        <end position="2273"/>
    </location>
</feature>
<feature type="region of interest" description="Condensation 2">
    <location>
        <begin position="2301"/>
        <end position="2709"/>
    </location>
</feature>
<feature type="region of interest" description="Adenylation 3">
    <location>
        <begin position="2733"/>
        <end position="3266"/>
    </location>
</feature>
<feature type="region of interest" description="Condensation 3">
    <location>
        <begin position="3406"/>
        <end position="3819"/>
    </location>
</feature>
<feature type="region of interest" description="Epimerase 2">
    <location>
        <begin position="3953"/>
        <end position="4392"/>
    </location>
</feature>
<feature type="region of interest" description="Condensation 4">
    <location>
        <begin position="4420"/>
        <end position="4823"/>
    </location>
</feature>
<feature type="region of interest" description="Adenylation 4">
    <location>
        <begin position="4837"/>
        <end position="5363"/>
    </location>
</feature>
<feature type="region of interest" description="Condensation 5">
    <location>
        <begin position="5508"/>
        <end position="5923"/>
    </location>
</feature>
<feature type="region of interest" description="Adenylation 5">
    <location>
        <begin position="5941"/>
        <end position="6459"/>
    </location>
</feature>
<feature type="region of interest" description="Condensation 6">
    <location>
        <begin position="6606"/>
        <end position="6992"/>
    </location>
</feature>
<feature type="region of interest" description="Adenylation 6">
    <location>
        <begin position="7030"/>
        <end position="7544"/>
    </location>
</feature>
<feature type="region of interest" description="Epimerase 3">
    <location>
        <begin position="7670"/>
        <end position="8119"/>
    </location>
</feature>
<feature type="region of interest" description="Condensation 7">
    <location>
        <begin position="8164"/>
        <end position="8504"/>
    </location>
</feature>
<feature type="region of interest" description="Disordered" evidence="2">
    <location>
        <begin position="8488"/>
        <end position="8515"/>
    </location>
</feature>
<feature type="compositionally biased region" description="Polar residues" evidence="2">
    <location>
        <begin position="8488"/>
        <end position="8500"/>
    </location>
</feature>
<feature type="modified residue" description="O-(pantetheine 4'-phosphoryl)serine" evidence="1">
    <location>
        <position position="652"/>
    </location>
</feature>
<feature type="modified residue" description="O-(pantetheine 4'-phosphoryl)serine" evidence="1">
    <location>
        <position position="1769"/>
    </location>
</feature>
<feature type="modified residue" description="O-(pantetheine 4'-phosphoryl)serine" evidence="1">
    <location>
        <position position="3323"/>
    </location>
</feature>
<feature type="modified residue" description="O-(pantetheine 4'-phosphoryl)serine" evidence="1">
    <location>
        <position position="3894"/>
    </location>
</feature>
<feature type="modified residue" description="O-(pantetheine 4'-phosphoryl)serine" evidence="1">
    <location>
        <position position="5422"/>
    </location>
</feature>
<feature type="modified residue" description="O-(pantetheine 4'-phosphoryl)serine" evidence="1">
    <location>
        <position position="6519"/>
    </location>
</feature>
<feature type="modified residue" description="O-(pantetheine 4'-phosphoryl)serine" evidence="1">
    <location>
        <position position="7612"/>
    </location>
</feature>
<name>NRPS8_ASPFU</name>
<organism>
    <name type="scientific">Aspergillus fumigatus (strain ATCC MYA-4609 / CBS 101355 / FGSC A1100 / Af293)</name>
    <name type="common">Neosartorya fumigata</name>
    <dbReference type="NCBI Taxonomy" id="330879"/>
    <lineage>
        <taxon>Eukaryota</taxon>
        <taxon>Fungi</taxon>
        <taxon>Dikarya</taxon>
        <taxon>Ascomycota</taxon>
        <taxon>Pezizomycotina</taxon>
        <taxon>Eurotiomycetes</taxon>
        <taxon>Eurotiomycetidae</taxon>
        <taxon>Eurotiales</taxon>
        <taxon>Aspergillaceae</taxon>
        <taxon>Aspergillus</taxon>
        <taxon>Aspergillus subgen. Fumigati</taxon>
    </lineage>
</organism>
<gene>
    <name type="primary">NRPS8</name>
    <name type="synonym">pes3</name>
    <name type="synonym">pesI</name>
    <name type="ORF">AFUA_5G12730</name>
</gene>
<evidence type="ECO:0000255" key="1">
    <source>
        <dbReference type="PROSITE-ProRule" id="PRU00258"/>
    </source>
</evidence>
<evidence type="ECO:0000256" key="2">
    <source>
        <dbReference type="SAM" id="MobiDB-lite"/>
    </source>
</evidence>
<evidence type="ECO:0000269" key="3">
    <source>
    </source>
</evidence>
<evidence type="ECO:0000269" key="4">
    <source>
    </source>
</evidence>
<evidence type="ECO:0000305" key="5"/>
<comment type="function">
    <text evidence="4">Nonribosomal peptide synthesis (NRPS) is a key mechanism responsible for the biosynthesis of bioactive metabolites which are potentially contributing to organismal virulence. However, contarary to other nonribosomal peptide synthases, NRPS8 does not encode a secreted peptide, but has more a structural role since it is involved in germ tube formation.</text>
</comment>
<comment type="domain">
    <text evidence="3">NRP synthetases are composed of discrete domains (adenylation (A), thiolation (T) or peptidyl carrier protein (PCP) and condensation (C) domains) which when grouped together are referred to as a single module. Each module is responsible for the recognition (via the A domain) and incorporation of a single amino acid into the growing peptide product. Thus, an NRP synthetase is generally composed of one or more modules and can terminate in a thioesterase domain (TE) that releases the newly synthesized peptide from the enzyme. Occasionally, epimerase (E) domains (responsible for l- to d- amino acid conversion) are present within the NRP synthetase. NRPS8 has the following architecture: A-T-C-A-T-E-C-A-T-C-T-E-C-A-T-C-A-T-C-A-T-E-C.</text>
</comment>
<comment type="disruption phenotype">
    <text evidence="4">In contrast to other NRP synthetases, deletion of NRPS8 significantly increases the virulence, probably through aberrant innate immune recognition of the fungus.</text>
</comment>
<comment type="similarity">
    <text evidence="5">Belongs to the NRP synthetase family.</text>
</comment>
<proteinExistence type="inferred from homology"/>
<reference key="1">
    <citation type="journal article" date="2005" name="Nature">
        <title>Genomic sequence of the pathogenic and allergenic filamentous fungus Aspergillus fumigatus.</title>
        <authorList>
            <person name="Nierman W.C."/>
            <person name="Pain A."/>
            <person name="Anderson M.J."/>
            <person name="Wortman J.R."/>
            <person name="Kim H.S."/>
            <person name="Arroyo J."/>
            <person name="Berriman M."/>
            <person name="Abe K."/>
            <person name="Archer D.B."/>
            <person name="Bermejo C."/>
            <person name="Bennett J.W."/>
            <person name="Bowyer P."/>
            <person name="Chen D."/>
            <person name="Collins M."/>
            <person name="Coulsen R."/>
            <person name="Davies R."/>
            <person name="Dyer P.S."/>
            <person name="Farman M.L."/>
            <person name="Fedorova N."/>
            <person name="Fedorova N.D."/>
            <person name="Feldblyum T.V."/>
            <person name="Fischer R."/>
            <person name="Fosker N."/>
            <person name="Fraser A."/>
            <person name="Garcia J.L."/>
            <person name="Garcia M.J."/>
            <person name="Goble A."/>
            <person name="Goldman G.H."/>
            <person name="Gomi K."/>
            <person name="Griffith-Jones S."/>
            <person name="Gwilliam R."/>
            <person name="Haas B.J."/>
            <person name="Haas H."/>
            <person name="Harris D.E."/>
            <person name="Horiuchi H."/>
            <person name="Huang J."/>
            <person name="Humphray S."/>
            <person name="Jimenez J."/>
            <person name="Keller N."/>
            <person name="Khouri H."/>
            <person name="Kitamoto K."/>
            <person name="Kobayashi T."/>
            <person name="Konzack S."/>
            <person name="Kulkarni R."/>
            <person name="Kumagai T."/>
            <person name="Lafton A."/>
            <person name="Latge J.-P."/>
            <person name="Li W."/>
            <person name="Lord A."/>
            <person name="Lu C."/>
            <person name="Majoros W.H."/>
            <person name="May G.S."/>
            <person name="Miller B.L."/>
            <person name="Mohamoud Y."/>
            <person name="Molina M."/>
            <person name="Monod M."/>
            <person name="Mouyna I."/>
            <person name="Mulligan S."/>
            <person name="Murphy L.D."/>
            <person name="O'Neil S."/>
            <person name="Paulsen I."/>
            <person name="Penalva M.A."/>
            <person name="Pertea M."/>
            <person name="Price C."/>
            <person name="Pritchard B.L."/>
            <person name="Quail M.A."/>
            <person name="Rabbinowitsch E."/>
            <person name="Rawlins N."/>
            <person name="Rajandream M.A."/>
            <person name="Reichard U."/>
            <person name="Renauld H."/>
            <person name="Robson G.D."/>
            <person name="Rodriguez de Cordoba S."/>
            <person name="Rodriguez-Pena J.M."/>
            <person name="Ronning C.M."/>
            <person name="Rutter S."/>
            <person name="Salzberg S.L."/>
            <person name="Sanchez M."/>
            <person name="Sanchez-Ferrero J.C."/>
            <person name="Saunders D."/>
            <person name="Seeger K."/>
            <person name="Squares R."/>
            <person name="Squares S."/>
            <person name="Takeuchi M."/>
            <person name="Tekaia F."/>
            <person name="Turner G."/>
            <person name="Vazquez de Aldana C.R."/>
            <person name="Weidman J."/>
            <person name="White O."/>
            <person name="Woodward J.R."/>
            <person name="Yu J.-H."/>
            <person name="Fraser C.M."/>
            <person name="Galagan J.E."/>
            <person name="Asai K."/>
            <person name="Machida M."/>
            <person name="Hall N."/>
            <person name="Barrell B.G."/>
            <person name="Denning D.W."/>
        </authorList>
    </citation>
    <scope>NUCLEOTIDE SEQUENCE [LARGE SCALE GENOMIC DNA]</scope>
    <source>
        <strain>ATCC MYA-4609 / CBS 101355 / FGSC A1100 / Af293</strain>
    </source>
</reference>
<reference key="2">
    <citation type="journal article" date="2006" name="Gene">
        <title>Phylogenomic analysis of non-ribosomal peptide synthetases in the genus Aspergillus.</title>
        <authorList>
            <person name="Cramer R.A. Jr."/>
            <person name="Stajich J.E."/>
            <person name="Yamanaka Y."/>
            <person name="Dietrich F.S."/>
            <person name="Steinbach W.J."/>
            <person name="Perfect J.R."/>
        </authorList>
    </citation>
    <scope>NOMENCLATURE</scope>
</reference>
<reference key="3">
    <citation type="journal article" date="2011" name="Infect. Immun.">
        <title>Targeted disruption of nonribosomal peptide synthetase pes3 augments the virulence of Aspergillus fumigatus.</title>
        <authorList>
            <person name="O'Hanlon K.A."/>
            <person name="Cairns T."/>
            <person name="Stack D."/>
            <person name="Schrettl M."/>
            <person name="Bignell E.M."/>
            <person name="Kavanagh K."/>
            <person name="Miggin S.M."/>
            <person name="O'Keeffe G."/>
            <person name="Larsen T.O."/>
            <person name="Doyle S."/>
        </authorList>
    </citation>
    <scope>DISRUPTION PHENOTYPE</scope>
    <scope>FUNCTION</scope>
</reference>
<reference key="4">
    <citation type="journal article" date="2007" name="Microbiology">
        <title>Nonribosomal peptide synthesis in Aspergillus fumigatus and other fungi.</title>
        <authorList>
            <person name="Stack D."/>
            <person name="Neville C."/>
            <person name="Doyle S."/>
        </authorList>
    </citation>
    <scope>REVIEW ON FUNCTION</scope>
    <scope>DOMAIN</scope>
</reference>
<keyword id="KW-0436">Ligase</keyword>
<keyword id="KW-0596">Phosphopantetheine</keyword>
<keyword id="KW-0597">Phosphoprotein</keyword>
<keyword id="KW-1185">Reference proteome</keyword>
<keyword id="KW-0677">Repeat</keyword>